<feature type="transit peptide" description="Mitochondrion" evidence="1">
    <location>
        <begin position="1"/>
        <end position="26"/>
    </location>
</feature>
<feature type="chain" id="PRO_0000005028" description="60 kDa heat shock protein, mitochondrial">
    <location>
        <begin position="27"/>
        <end position="573"/>
    </location>
</feature>
<feature type="binding site" evidence="2">
    <location>
        <position position="75"/>
    </location>
    <ligand>
        <name>ATP</name>
        <dbReference type="ChEBI" id="CHEBI:30616"/>
    </ligand>
</feature>
<feature type="binding site" evidence="2">
    <location>
        <begin position="111"/>
        <end position="115"/>
    </location>
    <ligand>
        <name>ATP</name>
        <dbReference type="ChEBI" id="CHEBI:30616"/>
    </ligand>
</feature>
<feature type="binding site" evidence="2">
    <location>
        <position position="440"/>
    </location>
    <ligand>
        <name>ATP</name>
        <dbReference type="ChEBI" id="CHEBI:30616"/>
    </ligand>
</feature>
<feature type="binding site" evidence="2">
    <location>
        <position position="520"/>
    </location>
    <ligand>
        <name>ATP</name>
        <dbReference type="ChEBI" id="CHEBI:30616"/>
    </ligand>
</feature>
<feature type="modified residue" description="N6-succinyllysine" evidence="3">
    <location>
        <position position="31"/>
    </location>
</feature>
<feature type="modified residue" description="Phosphoserine" evidence="2">
    <location>
        <position position="67"/>
    </location>
</feature>
<feature type="modified residue" description="Phosphoserine" evidence="2">
    <location>
        <position position="70"/>
    </location>
</feature>
<feature type="modified residue" description="N6-acetyllysine" evidence="3">
    <location>
        <position position="75"/>
    </location>
</feature>
<feature type="modified residue" description="N6-acetyllysine; alternate" evidence="2">
    <location>
        <position position="82"/>
    </location>
</feature>
<feature type="modified residue" description="N6-succinyllysine; alternate" evidence="3">
    <location>
        <position position="82"/>
    </location>
</feature>
<feature type="modified residue" description="N6-acetyllysine" evidence="3">
    <location>
        <position position="87"/>
    </location>
</feature>
<feature type="modified residue" description="Phosphotyrosine" evidence="2">
    <location>
        <position position="90"/>
    </location>
</feature>
<feature type="modified residue" description="N6-acetyllysine" evidence="3">
    <location>
        <position position="91"/>
    </location>
</feature>
<feature type="modified residue" description="N6-acetyllysine; alternate" evidence="2">
    <location>
        <position position="125"/>
    </location>
</feature>
<feature type="modified residue" description="N6-succinyllysine; alternate" evidence="3">
    <location>
        <position position="125"/>
    </location>
</feature>
<feature type="modified residue" description="N6-acetyllysine" evidence="2">
    <location>
        <position position="130"/>
    </location>
</feature>
<feature type="modified residue" description="N6-acetyllysine; alternate" evidence="3">
    <location>
        <position position="133"/>
    </location>
</feature>
<feature type="modified residue" description="N6-malonyllysine; alternate" evidence="1">
    <location>
        <position position="133"/>
    </location>
</feature>
<feature type="modified residue" description="N6-succinyllysine; alternate" evidence="3">
    <location>
        <position position="133"/>
    </location>
</feature>
<feature type="modified residue" description="N6-acetyllysine" evidence="3">
    <location>
        <position position="156"/>
    </location>
</feature>
<feature type="modified residue" description="N6-acetyllysine; alternate" evidence="3">
    <location>
        <position position="191"/>
    </location>
</feature>
<feature type="modified residue" description="N6-succinyllysine; alternate" evidence="3">
    <location>
        <position position="191"/>
    </location>
</feature>
<feature type="modified residue" description="N6-acetyllysine; alternate" evidence="2">
    <location>
        <position position="202"/>
    </location>
</feature>
<feature type="modified residue" description="N6-succinyllysine; alternate" evidence="3">
    <location>
        <position position="202"/>
    </location>
</feature>
<feature type="modified residue" description="N6-acetyllysine; alternate" evidence="3">
    <location>
        <position position="205"/>
    </location>
</feature>
<feature type="modified residue" description="N6-succinyllysine; alternate" evidence="3">
    <location>
        <position position="205"/>
    </location>
</feature>
<feature type="modified residue" description="N6-acetyllysine; alternate" evidence="2">
    <location>
        <position position="218"/>
    </location>
</feature>
<feature type="modified residue" description="N6-succinyllysine; alternate" evidence="3">
    <location>
        <position position="218"/>
    </location>
</feature>
<feature type="modified residue" description="N6-acetyllysine; alternate" evidence="3">
    <location>
        <position position="236"/>
    </location>
</feature>
<feature type="modified residue" description="N6-succinyllysine; alternate" evidence="3">
    <location>
        <position position="236"/>
    </location>
</feature>
<feature type="modified residue" description="N6-acetyllysine" evidence="3">
    <location>
        <position position="249"/>
    </location>
</feature>
<feature type="modified residue" description="N6-acetyllysine; alternate" evidence="3">
    <location>
        <position position="250"/>
    </location>
</feature>
<feature type="modified residue" description="N6-succinyllysine; alternate" evidence="3">
    <location>
        <position position="250"/>
    </location>
</feature>
<feature type="modified residue" description="N6-acetyllysine" evidence="2">
    <location>
        <position position="269"/>
    </location>
</feature>
<feature type="modified residue" description="N6-acetyllysine" evidence="3">
    <location>
        <position position="292"/>
    </location>
</feature>
<feature type="modified residue" description="N6-succinyllysine" evidence="3">
    <location>
        <position position="301"/>
    </location>
</feature>
<feature type="modified residue" description="N6-acetyllysine" evidence="3">
    <location>
        <position position="314"/>
    </location>
</feature>
<feature type="modified residue" description="N6-acetyllysine; alternate" evidence="2">
    <location>
        <position position="352"/>
    </location>
</feature>
<feature type="modified residue" description="N6-succinyllysine; alternate" evidence="3">
    <location>
        <position position="352"/>
    </location>
</feature>
<feature type="modified residue" description="N6-acetyllysine" evidence="3">
    <location>
        <position position="389"/>
    </location>
</feature>
<feature type="modified residue" description="N6-acetyllysine; alternate" evidence="2">
    <location>
        <position position="396"/>
    </location>
</feature>
<feature type="modified residue" description="N6-succinyllysine; alternate" evidence="3">
    <location>
        <position position="396"/>
    </location>
</feature>
<feature type="modified residue" description="Phosphoserine" evidence="3">
    <location>
        <position position="410"/>
    </location>
</feature>
<feature type="modified residue" description="N6-acetyllysine" evidence="2">
    <location>
        <position position="469"/>
    </location>
</feature>
<feature type="modified residue" description="N6-acetyllysine; alternate" evidence="3">
    <location>
        <position position="481"/>
    </location>
</feature>
<feature type="modified residue" description="N6-succinyllysine; alternate" evidence="3">
    <location>
        <position position="481"/>
    </location>
</feature>
<feature type="modified residue" description="Phosphoserine" evidence="2">
    <location>
        <position position="488"/>
    </location>
</feature>
<feature type="cross-link" description="Glycyl lysine isopeptide (Lys-Gly) (interchain with G-Cter in SUMO2)" evidence="2">
    <location>
        <position position="551"/>
    </location>
</feature>
<comment type="function">
    <text evidence="2">Chaperonin implicated in mitochondrial protein import and macromolecular assembly. Together with Hsp10, facilitates the correct folding of imported proteins. May also prevent misfolding and promote the refolding and proper assembly of unfolded polypeptides generated under stress conditions in the mitochondrial matrix. The functional units of these chaperonins consist of heptameric rings of the large subunit Hsp60, which function as a back-to-back double ring. In a cyclic reaction, Hsp60 ring complexes bind one unfolded substrate protein per ring, followed by the binding of ATP and association with 2 heptameric rings of the co-chaperonin Hsp10. This leads to sequestration of the substrate protein in the inner cavity of Hsp60 where, for a certain period of time, it can fold undisturbed by other cell components. Synchronous hydrolysis of ATP in all Hsp60 subunits results in the dissociation of the chaperonin rings and the release of ADP and the folded substrate protein.</text>
</comment>
<comment type="catalytic activity">
    <reaction evidence="2">
        <text>ATP + H2O + a folded polypeptide = ADP + phosphate + an unfolded polypeptide.</text>
        <dbReference type="EC" id="5.6.1.7"/>
    </reaction>
</comment>
<comment type="subunit">
    <text evidence="2 3">Homoheptamer arranged in a ring structure. The functional units of these chaperonins consist of heptameric rings of the large subunit Hsp60, which function as a back-to-back double ring. Interacts with 2 heptameric Hsp10 rings to form the symmetrical football complex (By similarity). Interacts with HRAS (By similarity). Interacts with ATAD3A. Interacts with ETFBKMT and EEF1AKMT3 (By similarity). Interacts with MFHAS1 (By similarity).</text>
</comment>
<comment type="subcellular location">
    <subcellularLocation>
        <location evidence="2">Mitochondrion matrix</location>
    </subcellularLocation>
</comment>
<comment type="similarity">
    <text evidence="4">Belongs to the chaperonin (HSP60) family.</text>
</comment>
<gene>
    <name type="primary">HSPD1</name>
</gene>
<proteinExistence type="evidence at transcript level"/>
<accession>Q5NVM5</accession>
<sequence length="573" mass="60998">MLRLPTVFRQMRPVSRVLAPHLTRAYAKDVKFGADARALMLRGVDLLADAVAVTMGPKGRTVIIEQSWGSPKVTKDGVTVAKSIDLKDKYKNIGAKLVQDVANNTNEEAGDGTTTATVLARSIAKEGFEKISKGANPVEIRRGVMLAVDAVIAELKKQSKPVTTPEEIAQVATISANGDKEIGNIISDAMKKVGRKGVITVKDGKTLNDELEIIEGMKFDRGYISPYFINTSKGQKCEFQDAYVLLSEKKISSVQSIVPALEIANAHRKPLVIIAEDVDGEALSTLVLNRLKVGLQVVAVKAPGFGDNRKNQLKDMAIATGGAVFGEEGLTLNLEDVQPHDLGKVGEVIVTKDDAMLLEGKGDKAQIEKRIQEIIEQLDVTTSEYEKEKLNERLAKLSDGVAVLKVGGTSDVEVNEKKDRVTDALNATRAAAEEGIVLGGGCALLRCIPALDSLTPANEDQKIGIEIIKRTLKIPAMTIAKNAGVEGSLIVEKIMQSSSEVGYDAMVGDFVNMVGKGIIDPTKVVRTALLDAAGVASLLTTAEVVVTEIPKEEKDPGMGAMGGMGGGMGGGMF</sequence>
<keyword id="KW-0007">Acetylation</keyword>
<keyword id="KW-0067">ATP-binding</keyword>
<keyword id="KW-0143">Chaperone</keyword>
<keyword id="KW-0413">Isomerase</keyword>
<keyword id="KW-1017">Isopeptide bond</keyword>
<keyword id="KW-0496">Mitochondrion</keyword>
<keyword id="KW-0547">Nucleotide-binding</keyword>
<keyword id="KW-0597">Phosphoprotein</keyword>
<keyword id="KW-1185">Reference proteome</keyword>
<keyword id="KW-0809">Transit peptide</keyword>
<keyword id="KW-0832">Ubl conjugation</keyword>
<evidence type="ECO:0000250" key="1"/>
<evidence type="ECO:0000250" key="2">
    <source>
        <dbReference type="UniProtKB" id="P10809"/>
    </source>
</evidence>
<evidence type="ECO:0000250" key="3">
    <source>
        <dbReference type="UniProtKB" id="P63038"/>
    </source>
</evidence>
<evidence type="ECO:0000305" key="4"/>
<protein>
    <recommendedName>
        <fullName>60 kDa heat shock protein, mitochondrial</fullName>
        <ecNumber evidence="2">5.6.1.7</ecNumber>
    </recommendedName>
    <alternativeName>
        <fullName>60 kDa chaperonin</fullName>
    </alternativeName>
    <alternativeName>
        <fullName>Chaperonin 60</fullName>
        <shortName>CPN60</shortName>
    </alternativeName>
    <alternativeName>
        <fullName>Heat shock protein 60</fullName>
        <shortName>HSP-60</shortName>
        <shortName>Hsp60</shortName>
    </alternativeName>
</protein>
<dbReference type="EC" id="5.6.1.7" evidence="2"/>
<dbReference type="EMBL" id="CR925996">
    <property type="protein sequence ID" value="CAI29638.1"/>
    <property type="molecule type" value="mRNA"/>
</dbReference>
<dbReference type="RefSeq" id="NP_001127086.1">
    <property type="nucleotide sequence ID" value="NM_001133614.1"/>
</dbReference>
<dbReference type="SMR" id="Q5NVM5"/>
<dbReference type="STRING" id="9601.ENSPPYP00000014577"/>
<dbReference type="GeneID" id="100174117"/>
<dbReference type="KEGG" id="pon:100174117"/>
<dbReference type="CTD" id="3329"/>
<dbReference type="eggNOG" id="KOG0356">
    <property type="taxonomic scope" value="Eukaryota"/>
</dbReference>
<dbReference type="InParanoid" id="Q5NVM5"/>
<dbReference type="OrthoDB" id="1733909at2759"/>
<dbReference type="Proteomes" id="UP000001595">
    <property type="component" value="Unplaced"/>
</dbReference>
<dbReference type="GO" id="GO:0005737">
    <property type="term" value="C:cytoplasm"/>
    <property type="evidence" value="ECO:0000250"/>
    <property type="project" value="UniProtKB"/>
</dbReference>
<dbReference type="GO" id="GO:0005759">
    <property type="term" value="C:mitochondrial matrix"/>
    <property type="evidence" value="ECO:0007669"/>
    <property type="project" value="UniProtKB-SubCell"/>
</dbReference>
<dbReference type="GO" id="GO:0032991">
    <property type="term" value="C:protein-containing complex"/>
    <property type="evidence" value="ECO:0000250"/>
    <property type="project" value="UniProtKB"/>
</dbReference>
<dbReference type="GO" id="GO:0005524">
    <property type="term" value="F:ATP binding"/>
    <property type="evidence" value="ECO:0007669"/>
    <property type="project" value="UniProtKB-KW"/>
</dbReference>
<dbReference type="GO" id="GO:0140662">
    <property type="term" value="F:ATP-dependent protein folding chaperone"/>
    <property type="evidence" value="ECO:0007669"/>
    <property type="project" value="InterPro"/>
</dbReference>
<dbReference type="GO" id="GO:0016853">
    <property type="term" value="F:isomerase activity"/>
    <property type="evidence" value="ECO:0007669"/>
    <property type="project" value="UniProtKB-KW"/>
</dbReference>
<dbReference type="GO" id="GO:0042026">
    <property type="term" value="P:protein refolding"/>
    <property type="evidence" value="ECO:0007669"/>
    <property type="project" value="InterPro"/>
</dbReference>
<dbReference type="GO" id="GO:0009409">
    <property type="term" value="P:response to cold"/>
    <property type="evidence" value="ECO:0000250"/>
    <property type="project" value="AgBase"/>
</dbReference>
<dbReference type="CDD" id="cd03344">
    <property type="entry name" value="GroEL"/>
    <property type="match status" value="1"/>
</dbReference>
<dbReference type="FunFam" id="3.50.7.10:FF:000001">
    <property type="entry name" value="60 kDa chaperonin"/>
    <property type="match status" value="1"/>
</dbReference>
<dbReference type="FunFam" id="1.10.560.10:FF:000011">
    <property type="entry name" value="60 kDa heat shock protein, mitochondrial"/>
    <property type="match status" value="1"/>
</dbReference>
<dbReference type="FunFam" id="1.10.560.10:FF:000026">
    <property type="entry name" value="Chaperonin 60 subunit alpha 2 chloroplastic"/>
    <property type="match status" value="1"/>
</dbReference>
<dbReference type="FunFam" id="3.30.260.10:FF:000018">
    <property type="entry name" value="Heat shock protein 60"/>
    <property type="match status" value="1"/>
</dbReference>
<dbReference type="Gene3D" id="3.50.7.10">
    <property type="entry name" value="GroEL"/>
    <property type="match status" value="1"/>
</dbReference>
<dbReference type="Gene3D" id="1.10.560.10">
    <property type="entry name" value="GroEL-like equatorial domain"/>
    <property type="match status" value="1"/>
</dbReference>
<dbReference type="Gene3D" id="3.30.260.10">
    <property type="entry name" value="TCP-1-like chaperonin intermediate domain"/>
    <property type="match status" value="1"/>
</dbReference>
<dbReference type="HAMAP" id="MF_00600">
    <property type="entry name" value="CH60"/>
    <property type="match status" value="1"/>
</dbReference>
<dbReference type="InterPro" id="IPR018370">
    <property type="entry name" value="Chaperonin_Cpn60_CS"/>
</dbReference>
<dbReference type="InterPro" id="IPR001844">
    <property type="entry name" value="Cpn60/GroEL"/>
</dbReference>
<dbReference type="InterPro" id="IPR002423">
    <property type="entry name" value="Cpn60/GroEL/TCP-1"/>
</dbReference>
<dbReference type="InterPro" id="IPR027409">
    <property type="entry name" value="GroEL-like_apical_dom_sf"/>
</dbReference>
<dbReference type="InterPro" id="IPR027413">
    <property type="entry name" value="GROEL-like_equatorial_sf"/>
</dbReference>
<dbReference type="InterPro" id="IPR027410">
    <property type="entry name" value="TCP-1-like_intermed_sf"/>
</dbReference>
<dbReference type="NCBIfam" id="TIGR02348">
    <property type="entry name" value="GroEL"/>
    <property type="match status" value="1"/>
</dbReference>
<dbReference type="NCBIfam" id="NF000592">
    <property type="entry name" value="PRK00013.1"/>
    <property type="match status" value="1"/>
</dbReference>
<dbReference type="NCBIfam" id="NF009487">
    <property type="entry name" value="PRK12849.1"/>
    <property type="match status" value="1"/>
</dbReference>
<dbReference type="NCBIfam" id="NF009488">
    <property type="entry name" value="PRK12850.1"/>
    <property type="match status" value="1"/>
</dbReference>
<dbReference type="NCBIfam" id="NF009489">
    <property type="entry name" value="PRK12851.1"/>
    <property type="match status" value="1"/>
</dbReference>
<dbReference type="PANTHER" id="PTHR45633">
    <property type="entry name" value="60 KDA HEAT SHOCK PROTEIN, MITOCHONDRIAL"/>
    <property type="match status" value="1"/>
</dbReference>
<dbReference type="Pfam" id="PF00118">
    <property type="entry name" value="Cpn60_TCP1"/>
    <property type="match status" value="1"/>
</dbReference>
<dbReference type="PRINTS" id="PR00298">
    <property type="entry name" value="CHAPERONIN60"/>
</dbReference>
<dbReference type="SUPFAM" id="SSF52029">
    <property type="entry name" value="GroEL apical domain-like"/>
    <property type="match status" value="1"/>
</dbReference>
<dbReference type="SUPFAM" id="SSF48592">
    <property type="entry name" value="GroEL equatorial domain-like"/>
    <property type="match status" value="1"/>
</dbReference>
<dbReference type="SUPFAM" id="SSF54849">
    <property type="entry name" value="GroEL-intermediate domain like"/>
    <property type="match status" value="1"/>
</dbReference>
<dbReference type="PROSITE" id="PS00296">
    <property type="entry name" value="CHAPERONINS_CPN60"/>
    <property type="match status" value="1"/>
</dbReference>
<name>CH60_PONAB</name>
<organism>
    <name type="scientific">Pongo abelii</name>
    <name type="common">Sumatran orangutan</name>
    <name type="synonym">Pongo pygmaeus abelii</name>
    <dbReference type="NCBI Taxonomy" id="9601"/>
    <lineage>
        <taxon>Eukaryota</taxon>
        <taxon>Metazoa</taxon>
        <taxon>Chordata</taxon>
        <taxon>Craniata</taxon>
        <taxon>Vertebrata</taxon>
        <taxon>Euteleostomi</taxon>
        <taxon>Mammalia</taxon>
        <taxon>Eutheria</taxon>
        <taxon>Euarchontoglires</taxon>
        <taxon>Primates</taxon>
        <taxon>Haplorrhini</taxon>
        <taxon>Catarrhini</taxon>
        <taxon>Hominidae</taxon>
        <taxon>Pongo</taxon>
    </lineage>
</organism>
<reference key="1">
    <citation type="submission" date="2004-11" db="EMBL/GenBank/DDBJ databases">
        <authorList>
            <consortium name="The German cDNA consortium"/>
        </authorList>
    </citation>
    <scope>NUCLEOTIDE SEQUENCE [LARGE SCALE MRNA]</scope>
    <source>
        <tissue>Brain cortex</tissue>
    </source>
</reference>